<organismHost>
    <name type="scientific">Ornithodoros</name>
    <name type="common">relapsing fever ticks</name>
    <dbReference type="NCBI Taxonomy" id="6937"/>
</organismHost>
<organismHost>
    <name type="scientific">Phacochoerus aethiopicus</name>
    <name type="common">Warthog</name>
    <dbReference type="NCBI Taxonomy" id="85517"/>
</organismHost>
<organismHost>
    <name type="scientific">Phacochoerus africanus</name>
    <name type="common">Warthog</name>
    <dbReference type="NCBI Taxonomy" id="41426"/>
</organismHost>
<organismHost>
    <name type="scientific">Potamochoerus larvatus</name>
    <name type="common">Bushpig</name>
    <dbReference type="NCBI Taxonomy" id="273792"/>
</organismHost>
<organismHost>
    <name type="scientific">Sus scrofa</name>
    <name type="common">Pig</name>
    <dbReference type="NCBI Taxonomy" id="9823"/>
</organismHost>
<evidence type="ECO:0000250" key="1"/>
<evidence type="ECO:0000250" key="2">
    <source>
        <dbReference type="UniProtKB" id="Q65187"/>
    </source>
</evidence>
<evidence type="ECO:0000305" key="3"/>
<comment type="subunit">
    <text evidence="1">Interacts with NACA (alpha chain of nascent polypeptide-associated complex).</text>
</comment>
<comment type="subcellular location">
    <subcellularLocation>
        <location evidence="2">Host cytoplasm</location>
    </subcellularLocation>
    <subcellularLocation>
        <location evidence="2">Host nucleus</location>
    </subcellularLocation>
    <subcellularLocation>
        <location evidence="2">Virion</location>
    </subcellularLocation>
</comment>
<comment type="induction">
    <text evidence="3">Expressed in the late phase of the viral replicative cycle.</text>
</comment>
<comment type="similarity">
    <text evidence="3">Belongs to the asfivirus H339R family.</text>
</comment>
<keyword id="KW-1035">Host cytoplasm</keyword>
<keyword id="KW-1048">Host nucleus</keyword>
<keyword id="KW-0945">Host-virus interaction</keyword>
<keyword id="KW-0426">Late protein</keyword>
<keyword id="KW-0946">Virion</keyword>
<reference key="1">
    <citation type="submission" date="2003-03" db="EMBL/GenBank/DDBJ databases">
        <title>African swine fever virus genomes.</title>
        <authorList>
            <person name="Kutish G.F."/>
            <person name="Rock D.L."/>
        </authorList>
    </citation>
    <scope>NUCLEOTIDE SEQUENCE [LARGE SCALE GENOMIC DNA]</scope>
</reference>
<dbReference type="EMBL" id="AY261360">
    <property type="status" value="NOT_ANNOTATED_CDS"/>
    <property type="molecule type" value="Genomic_DNA"/>
</dbReference>
<dbReference type="SMR" id="P0CAN3"/>
<dbReference type="Proteomes" id="UP000000861">
    <property type="component" value="Segment"/>
</dbReference>
<dbReference type="GO" id="GO:0030430">
    <property type="term" value="C:host cell cytoplasm"/>
    <property type="evidence" value="ECO:0007669"/>
    <property type="project" value="UniProtKB-SubCell"/>
</dbReference>
<dbReference type="GO" id="GO:0042025">
    <property type="term" value="C:host cell nucleus"/>
    <property type="evidence" value="ECO:0007669"/>
    <property type="project" value="UniProtKB-SubCell"/>
</dbReference>
<dbReference type="GO" id="GO:0044423">
    <property type="term" value="C:virion component"/>
    <property type="evidence" value="ECO:0007669"/>
    <property type="project" value="UniProtKB-KW"/>
</dbReference>
<accession>P0CAN3</accession>
<feature type="chain" id="PRO_0000373770" description="Protein H339R">
    <location>
        <begin position="1"/>
        <end position="339"/>
    </location>
</feature>
<gene>
    <name type="ordered locus">Ken-128</name>
</gene>
<organism>
    <name type="scientific">African swine fever virus (isolate Pig/Kenya/KEN-50/1950)</name>
    <name type="common">ASFV</name>
    <dbReference type="NCBI Taxonomy" id="561445"/>
    <lineage>
        <taxon>Viruses</taxon>
        <taxon>Varidnaviria</taxon>
        <taxon>Bamfordvirae</taxon>
        <taxon>Nucleocytoviricota</taxon>
        <taxon>Pokkesviricetes</taxon>
        <taxon>Asfuvirales</taxon>
        <taxon>Asfarviridae</taxon>
        <taxon>Asfivirus</taxon>
        <taxon>African swine fever virus</taxon>
    </lineage>
</organism>
<name>VFH33_ASFK5</name>
<sequence>MAGRVKIKQKELIDSTVKNKNVMNLFHEIIGSKGNINFSVVWPKFKKIKQSVYDYISTLSVLEKASVMQNFEDDKKMLELFVQKLWAAYEGYFKYPEIEKYEVEGQVNFNQVPHYVLEKFSQLYRSRINSELVTLILNSCAFLSKYNDYILKKDPYILTITPGLCFSPIPNFEDLNFKYLYNSDKNSQHDKDFIMFILYKLYTAALGVYNAISIPDIDVEDLENIILSSVSQIKKQIPRCKDAFNKIESSVHLLRKNFNTYYSDYVGSGYNPTIIMEQYIKDISQDSKNISPRISYQFRTIIKYYRDMIATKHQTMDPQVLNLVKHVEKKLDMLDREKN</sequence>
<protein>
    <recommendedName>
        <fullName>Protein H339R</fullName>
        <shortName>pH339R</shortName>
    </recommendedName>
    <alternativeName>
        <fullName>Protein j4R</fullName>
    </alternativeName>
</protein>
<proteinExistence type="inferred from homology"/>